<reference key="1">
    <citation type="submission" date="2008-04" db="EMBL/GenBank/DDBJ databases">
        <title>Complete sequence of Yersinia pseudotuberculosis PB1/+.</title>
        <authorList>
            <person name="Copeland A."/>
            <person name="Lucas S."/>
            <person name="Lapidus A."/>
            <person name="Glavina del Rio T."/>
            <person name="Dalin E."/>
            <person name="Tice H."/>
            <person name="Bruce D."/>
            <person name="Goodwin L."/>
            <person name="Pitluck S."/>
            <person name="Munk A.C."/>
            <person name="Brettin T."/>
            <person name="Detter J.C."/>
            <person name="Han C."/>
            <person name="Tapia R."/>
            <person name="Schmutz J."/>
            <person name="Larimer F."/>
            <person name="Land M."/>
            <person name="Hauser L."/>
            <person name="Challacombe J.F."/>
            <person name="Green L."/>
            <person name="Lindler L.E."/>
            <person name="Nikolich M.P."/>
            <person name="Richardson P."/>
        </authorList>
    </citation>
    <scope>NUCLEOTIDE SEQUENCE [LARGE SCALE GENOMIC DNA]</scope>
    <source>
        <strain>PB1/+</strain>
    </source>
</reference>
<accession>B2K5F2</accession>
<sequence length="353" mass="39249">MSEPLKPRIDFEQPLQSLDEPVLKSAQAFDEQAAEKFYPAAPELDAEDEEGRVEGLVNAALKPKRSLWRKMVTAGMVILGASVIAQSVQWVNQAWQQQDWIALGATTAGGLIILAGVGSVVTEWRRLYHLRQRAEERDIARALLVSHGVGQGRVFCEKLARQAGLDQGHPALQRWLASLHETHNDREVVELYAKLVQPALDNQARAEISRYAAESALMIAVSPLALVDMAFIAWRNIRLINRIAALYGIELGYFSRIRLFRLVLLNIAFAGASELVREVGMDWLSQDLAARLSARAAQGIGAGLLTARLGIKAMELCRPLPWLEGDKPKLGDFRRQLMNQLKNTLPKKDKTAH</sequence>
<dbReference type="EMBL" id="CP001048">
    <property type="protein sequence ID" value="ACC89303.1"/>
    <property type="molecule type" value="Genomic_DNA"/>
</dbReference>
<dbReference type="RefSeq" id="WP_012413752.1">
    <property type="nucleotide sequence ID" value="NZ_CP009780.1"/>
</dbReference>
<dbReference type="GeneID" id="49785738"/>
<dbReference type="KEGG" id="ypb:YPTS_2342"/>
<dbReference type="PATRIC" id="fig|502801.10.peg.1742"/>
<dbReference type="GO" id="GO:0005886">
    <property type="term" value="C:plasma membrane"/>
    <property type="evidence" value="ECO:0007669"/>
    <property type="project" value="UniProtKB-SubCell"/>
</dbReference>
<dbReference type="HAMAP" id="MF_01085">
    <property type="entry name" value="UPF0283"/>
    <property type="match status" value="1"/>
</dbReference>
<dbReference type="InterPro" id="IPR021147">
    <property type="entry name" value="DUF697"/>
</dbReference>
<dbReference type="InterPro" id="IPR006507">
    <property type="entry name" value="UPF0283"/>
</dbReference>
<dbReference type="NCBIfam" id="TIGR01620">
    <property type="entry name" value="hyp_HI0043"/>
    <property type="match status" value="1"/>
</dbReference>
<dbReference type="PANTHER" id="PTHR39342">
    <property type="entry name" value="UPF0283 MEMBRANE PROTEIN YCJF"/>
    <property type="match status" value="1"/>
</dbReference>
<dbReference type="PANTHER" id="PTHR39342:SF1">
    <property type="entry name" value="UPF0283 MEMBRANE PROTEIN YCJF"/>
    <property type="match status" value="1"/>
</dbReference>
<dbReference type="Pfam" id="PF05128">
    <property type="entry name" value="DUF697"/>
    <property type="match status" value="1"/>
</dbReference>
<evidence type="ECO:0000255" key="1">
    <source>
        <dbReference type="HAMAP-Rule" id="MF_01085"/>
    </source>
</evidence>
<protein>
    <recommendedName>
        <fullName evidence="1">UPF0283 membrane protein YPTS_2342</fullName>
    </recommendedName>
</protein>
<proteinExistence type="inferred from homology"/>
<feature type="chain" id="PRO_1000136902" description="UPF0283 membrane protein YPTS_2342">
    <location>
        <begin position="1"/>
        <end position="353"/>
    </location>
</feature>
<feature type="transmembrane region" description="Helical" evidence="1">
    <location>
        <begin position="71"/>
        <end position="91"/>
    </location>
</feature>
<feature type="transmembrane region" description="Helical" evidence="1">
    <location>
        <begin position="101"/>
        <end position="121"/>
    </location>
</feature>
<feature type="transmembrane region" description="Helical" evidence="1">
    <location>
        <begin position="214"/>
        <end position="234"/>
    </location>
</feature>
<gene>
    <name type="ordered locus">YPTS_2342</name>
</gene>
<comment type="subcellular location">
    <subcellularLocation>
        <location evidence="1">Cell inner membrane</location>
        <topology evidence="1">Multi-pass membrane protein</topology>
    </subcellularLocation>
</comment>
<comment type="similarity">
    <text evidence="1">Belongs to the UPF0283 family.</text>
</comment>
<name>Y2342_YERPB</name>
<organism>
    <name type="scientific">Yersinia pseudotuberculosis serotype IB (strain PB1/+)</name>
    <dbReference type="NCBI Taxonomy" id="502801"/>
    <lineage>
        <taxon>Bacteria</taxon>
        <taxon>Pseudomonadati</taxon>
        <taxon>Pseudomonadota</taxon>
        <taxon>Gammaproteobacteria</taxon>
        <taxon>Enterobacterales</taxon>
        <taxon>Yersiniaceae</taxon>
        <taxon>Yersinia</taxon>
    </lineage>
</organism>
<keyword id="KW-0997">Cell inner membrane</keyword>
<keyword id="KW-1003">Cell membrane</keyword>
<keyword id="KW-0472">Membrane</keyword>
<keyword id="KW-0812">Transmembrane</keyword>
<keyword id="KW-1133">Transmembrane helix</keyword>